<accession>Q6YR10</accession>
<evidence type="ECO:0000255" key="1">
    <source>
        <dbReference type="HAMAP-Rule" id="MF_01333"/>
    </source>
</evidence>
<evidence type="ECO:0000305" key="2"/>
<sequence length="181" mass="20318">MSMKKENTLDYSKITATLMETFNYKSVMQVPKVEKVVINMGVGDAIFNVKVLDDVVEELKLLSGQSPVITKAKKAISNFKLREGMPIGAKVTLRGARKEAFLCKLTRLVFPRVRDFRGISGKSFDGRGNYALGLKEQIVFPEINIDKVKKIRGMDIIIVTTAKNNTQAKKLLELYGMPFKN</sequence>
<feature type="chain" id="PRO_0000124961" description="Large ribosomal subunit protein uL5">
    <location>
        <begin position="1"/>
        <end position="181"/>
    </location>
</feature>
<reference key="1">
    <citation type="journal article" date="2004" name="Nat. Genet.">
        <title>Reductive evolution suggested from the complete genome sequence of a plant-pathogenic phytoplasma.</title>
        <authorList>
            <person name="Oshima K."/>
            <person name="Kakizawa S."/>
            <person name="Nishigawa H."/>
            <person name="Jung H.-Y."/>
            <person name="Wei W."/>
            <person name="Suzuki S."/>
            <person name="Arashida R."/>
            <person name="Nakata D."/>
            <person name="Miyata S."/>
            <person name="Ugaki M."/>
            <person name="Namba S."/>
        </authorList>
    </citation>
    <scope>NUCLEOTIDE SEQUENCE [LARGE SCALE GENOMIC DNA]</scope>
    <source>
        <strain>OY-M</strain>
    </source>
</reference>
<keyword id="KW-0687">Ribonucleoprotein</keyword>
<keyword id="KW-0689">Ribosomal protein</keyword>
<keyword id="KW-0694">RNA-binding</keyword>
<keyword id="KW-0699">rRNA-binding</keyword>
<keyword id="KW-0820">tRNA-binding</keyword>
<protein>
    <recommendedName>
        <fullName evidence="1">Large ribosomal subunit protein uL5</fullName>
    </recommendedName>
    <alternativeName>
        <fullName evidence="2">50S ribosomal protein L5</fullName>
    </alternativeName>
</protein>
<gene>
    <name evidence="1" type="primary">rplE</name>
    <name type="ordered locus">PAM_212</name>
</gene>
<dbReference type="EMBL" id="AP006628">
    <property type="protein sequence ID" value="BAD04297.1"/>
    <property type="molecule type" value="Genomic_DNA"/>
</dbReference>
<dbReference type="SMR" id="Q6YR10"/>
<dbReference type="STRING" id="262768.PAM_212"/>
<dbReference type="KEGG" id="poy:PAM_212"/>
<dbReference type="eggNOG" id="COG0094">
    <property type="taxonomic scope" value="Bacteria"/>
</dbReference>
<dbReference type="HOGENOM" id="CLU_061015_2_1_14"/>
<dbReference type="Proteomes" id="UP000002523">
    <property type="component" value="Chromosome"/>
</dbReference>
<dbReference type="GO" id="GO:1990904">
    <property type="term" value="C:ribonucleoprotein complex"/>
    <property type="evidence" value="ECO:0007669"/>
    <property type="project" value="UniProtKB-KW"/>
</dbReference>
<dbReference type="GO" id="GO:0005840">
    <property type="term" value="C:ribosome"/>
    <property type="evidence" value="ECO:0007669"/>
    <property type="project" value="UniProtKB-KW"/>
</dbReference>
<dbReference type="GO" id="GO:0019843">
    <property type="term" value="F:rRNA binding"/>
    <property type="evidence" value="ECO:0007669"/>
    <property type="project" value="UniProtKB-UniRule"/>
</dbReference>
<dbReference type="GO" id="GO:0003735">
    <property type="term" value="F:structural constituent of ribosome"/>
    <property type="evidence" value="ECO:0007669"/>
    <property type="project" value="InterPro"/>
</dbReference>
<dbReference type="GO" id="GO:0000049">
    <property type="term" value="F:tRNA binding"/>
    <property type="evidence" value="ECO:0007669"/>
    <property type="project" value="UniProtKB-UniRule"/>
</dbReference>
<dbReference type="GO" id="GO:0006412">
    <property type="term" value="P:translation"/>
    <property type="evidence" value="ECO:0007669"/>
    <property type="project" value="UniProtKB-UniRule"/>
</dbReference>
<dbReference type="FunFam" id="3.30.1440.10:FF:000001">
    <property type="entry name" value="50S ribosomal protein L5"/>
    <property type="match status" value="1"/>
</dbReference>
<dbReference type="Gene3D" id="3.30.1440.10">
    <property type="match status" value="1"/>
</dbReference>
<dbReference type="HAMAP" id="MF_01333_B">
    <property type="entry name" value="Ribosomal_uL5_B"/>
    <property type="match status" value="1"/>
</dbReference>
<dbReference type="InterPro" id="IPR002132">
    <property type="entry name" value="Ribosomal_uL5"/>
</dbReference>
<dbReference type="InterPro" id="IPR020930">
    <property type="entry name" value="Ribosomal_uL5_bac-type"/>
</dbReference>
<dbReference type="InterPro" id="IPR031309">
    <property type="entry name" value="Ribosomal_uL5_C"/>
</dbReference>
<dbReference type="InterPro" id="IPR020929">
    <property type="entry name" value="Ribosomal_uL5_CS"/>
</dbReference>
<dbReference type="InterPro" id="IPR022803">
    <property type="entry name" value="Ribosomal_uL5_dom_sf"/>
</dbReference>
<dbReference type="InterPro" id="IPR031310">
    <property type="entry name" value="Ribosomal_uL5_N"/>
</dbReference>
<dbReference type="NCBIfam" id="NF000585">
    <property type="entry name" value="PRK00010.1"/>
    <property type="match status" value="1"/>
</dbReference>
<dbReference type="PANTHER" id="PTHR11994">
    <property type="entry name" value="60S RIBOSOMAL PROTEIN L11-RELATED"/>
    <property type="match status" value="1"/>
</dbReference>
<dbReference type="Pfam" id="PF00281">
    <property type="entry name" value="Ribosomal_L5"/>
    <property type="match status" value="1"/>
</dbReference>
<dbReference type="Pfam" id="PF00673">
    <property type="entry name" value="Ribosomal_L5_C"/>
    <property type="match status" value="1"/>
</dbReference>
<dbReference type="PIRSF" id="PIRSF002161">
    <property type="entry name" value="Ribosomal_L5"/>
    <property type="match status" value="1"/>
</dbReference>
<dbReference type="SUPFAM" id="SSF55282">
    <property type="entry name" value="RL5-like"/>
    <property type="match status" value="1"/>
</dbReference>
<dbReference type="PROSITE" id="PS00358">
    <property type="entry name" value="RIBOSOMAL_L5"/>
    <property type="match status" value="1"/>
</dbReference>
<comment type="function">
    <text evidence="1">This is one of the proteins that bind and probably mediate the attachment of the 5S RNA into the large ribosomal subunit, where it forms part of the central protuberance. In the 70S ribosome it contacts protein S13 of the 30S subunit (bridge B1b), connecting the 2 subunits; this bridge is implicated in subunit movement. Contacts the P site tRNA; the 5S rRNA and some of its associated proteins might help stabilize positioning of ribosome-bound tRNAs.</text>
</comment>
<comment type="subunit">
    <text evidence="1">Part of the 50S ribosomal subunit; part of the 5S rRNA/L5/L18/L25 subcomplex. Contacts the 5S rRNA and the P site tRNA. Forms a bridge to the 30S subunit in the 70S ribosome.</text>
</comment>
<comment type="similarity">
    <text evidence="1">Belongs to the universal ribosomal protein uL5 family.</text>
</comment>
<proteinExistence type="inferred from homology"/>
<name>RL5_ONYPE</name>
<organism>
    <name type="scientific">Onion yellows phytoplasma (strain OY-M)</name>
    <dbReference type="NCBI Taxonomy" id="262768"/>
    <lineage>
        <taxon>Bacteria</taxon>
        <taxon>Bacillati</taxon>
        <taxon>Mycoplasmatota</taxon>
        <taxon>Mollicutes</taxon>
        <taxon>Acholeplasmatales</taxon>
        <taxon>Acholeplasmataceae</taxon>
        <taxon>Candidatus Phytoplasma</taxon>
        <taxon>16SrI (Aster yellows group)</taxon>
    </lineage>
</organism>